<comment type="function">
    <text evidence="1">Catalyzes the synthesis of Und-PP-GlcNAc-ManNAcA (Lipid II), the second lipid-linked intermediate involved in enterobacterial common antigen (ECA) synthesis.</text>
</comment>
<comment type="catalytic activity">
    <reaction evidence="1">
        <text>UDP-N-acetyl-alpha-D-mannosaminouronate + N-acetyl-alpha-D-glucosaminyl-di-trans,octa-cis-undecaprenyl diphosphate = beta-D-ManNAcA-(1-&gt;4)-alpha-D-GlcNAc-di-trans,octa-cis-undecaprenyl diphosphate + UDP + H(+)</text>
        <dbReference type="Rhea" id="RHEA:28366"/>
        <dbReference type="ChEBI" id="CHEBI:15378"/>
        <dbReference type="ChEBI" id="CHEBI:58223"/>
        <dbReference type="ChEBI" id="CHEBI:61495"/>
        <dbReference type="ChEBI" id="CHEBI:62959"/>
        <dbReference type="ChEBI" id="CHEBI:70731"/>
        <dbReference type="EC" id="2.4.1.180"/>
    </reaction>
</comment>
<comment type="pathway">
    <text evidence="1">Bacterial outer membrane biogenesis; enterobacterial common antigen biosynthesis.</text>
</comment>
<comment type="similarity">
    <text evidence="1">Belongs to the glycosyltransferase 26 family.</text>
</comment>
<reference key="1">
    <citation type="journal article" date="2008" name="PLoS Genet.">
        <title>Complete genome sequence of the N2-fixing broad host range endophyte Klebsiella pneumoniae 342 and virulence predictions verified in mice.</title>
        <authorList>
            <person name="Fouts D.E."/>
            <person name="Tyler H.L."/>
            <person name="DeBoy R.T."/>
            <person name="Daugherty S."/>
            <person name="Ren Q."/>
            <person name="Badger J.H."/>
            <person name="Durkin A.S."/>
            <person name="Huot H."/>
            <person name="Shrivastava S."/>
            <person name="Kothari S."/>
            <person name="Dodson R.J."/>
            <person name="Mohamoud Y."/>
            <person name="Khouri H."/>
            <person name="Roesch L.F.W."/>
            <person name="Krogfelt K.A."/>
            <person name="Struve C."/>
            <person name="Triplett E.W."/>
            <person name="Methe B.A."/>
        </authorList>
    </citation>
    <scope>NUCLEOTIDE SEQUENCE [LARGE SCALE GENOMIC DNA]</scope>
    <source>
        <strain>342</strain>
    </source>
</reference>
<gene>
    <name evidence="1" type="primary">wecG</name>
    <name evidence="1" type="synonym">rffM</name>
    <name type="ordered locus">KPK_5384</name>
</gene>
<accession>B5XYX5</accession>
<sequence>MTGTISAPLYLLRGLQLIGWRDMQHALDYLYADGALREGTLVAINAEKMLAVEDNPEVRALIEAAEFKYADGISVVRSLRKKYPQAQVSRVAGADLWEALMQRAGAEGTPVFLVGGKPEVLTQTESRLRQRWQVNIVGSQDGYFTPEQRQTLFERIRDSGAKIVTVAMGSPRQEIFMRDCRRLYPHALYMGVGGTYDVFTGHVHRAPKFWQDLGLEWFYRLLLQPSRIKRQFRLLRYLRWHYTGKL</sequence>
<protein>
    <recommendedName>
        <fullName evidence="1">UDP-N-acetyl-D-mannosaminuronic acid transferase</fullName>
        <shortName evidence="1">UDP-ManNAcA transferase</shortName>
        <ecNumber evidence="1">2.4.1.180</ecNumber>
    </recommendedName>
</protein>
<organism>
    <name type="scientific">Klebsiella pneumoniae (strain 342)</name>
    <dbReference type="NCBI Taxonomy" id="507522"/>
    <lineage>
        <taxon>Bacteria</taxon>
        <taxon>Pseudomonadati</taxon>
        <taxon>Pseudomonadota</taxon>
        <taxon>Gammaproteobacteria</taxon>
        <taxon>Enterobacterales</taxon>
        <taxon>Enterobacteriaceae</taxon>
        <taxon>Klebsiella/Raoultella group</taxon>
        <taxon>Klebsiella</taxon>
        <taxon>Klebsiella pneumoniae complex</taxon>
    </lineage>
</organism>
<feature type="chain" id="PRO_1000134580" description="UDP-N-acetyl-D-mannosaminuronic acid transferase">
    <location>
        <begin position="1"/>
        <end position="246"/>
    </location>
</feature>
<dbReference type="EC" id="2.4.1.180" evidence="1"/>
<dbReference type="EMBL" id="CP000964">
    <property type="protein sequence ID" value="ACI08177.1"/>
    <property type="molecule type" value="Genomic_DNA"/>
</dbReference>
<dbReference type="SMR" id="B5XYX5"/>
<dbReference type="CAZy" id="GT26">
    <property type="family name" value="Glycosyltransferase Family 26"/>
</dbReference>
<dbReference type="KEGG" id="kpe:KPK_5384"/>
<dbReference type="HOGENOM" id="CLU_063203_3_2_6"/>
<dbReference type="UniPathway" id="UPA00566"/>
<dbReference type="Proteomes" id="UP000001734">
    <property type="component" value="Chromosome"/>
</dbReference>
<dbReference type="GO" id="GO:0047241">
    <property type="term" value="F:lipopolysaccharide N-acetylmannosaminouronosyltransferase activity"/>
    <property type="evidence" value="ECO:0007669"/>
    <property type="project" value="UniProtKB-UniRule"/>
</dbReference>
<dbReference type="GO" id="GO:0009246">
    <property type="term" value="P:enterobacterial common antigen biosynthetic process"/>
    <property type="evidence" value="ECO:0007669"/>
    <property type="project" value="UniProtKB-UniRule"/>
</dbReference>
<dbReference type="CDD" id="cd06533">
    <property type="entry name" value="Glyco_transf_WecG_TagA"/>
    <property type="match status" value="1"/>
</dbReference>
<dbReference type="HAMAP" id="MF_01001">
    <property type="entry name" value="WecG_RffM"/>
    <property type="match status" value="1"/>
</dbReference>
<dbReference type="InterPro" id="IPR023085">
    <property type="entry name" value="UDP-ManNAcA_Trfase_WecG"/>
</dbReference>
<dbReference type="InterPro" id="IPR004629">
    <property type="entry name" value="WecG_TagA_CpsF"/>
</dbReference>
<dbReference type="NCBIfam" id="NF002980">
    <property type="entry name" value="PRK03692.1"/>
    <property type="match status" value="1"/>
</dbReference>
<dbReference type="NCBIfam" id="TIGR00696">
    <property type="entry name" value="wecG_tagA_cpsF"/>
    <property type="match status" value="1"/>
</dbReference>
<dbReference type="PANTHER" id="PTHR34136">
    <property type="match status" value="1"/>
</dbReference>
<dbReference type="PANTHER" id="PTHR34136:SF1">
    <property type="entry name" value="UDP-N-ACETYL-D-MANNOSAMINURONIC ACID TRANSFERASE"/>
    <property type="match status" value="1"/>
</dbReference>
<dbReference type="Pfam" id="PF03808">
    <property type="entry name" value="Glyco_tran_WecG"/>
    <property type="match status" value="1"/>
</dbReference>
<evidence type="ECO:0000255" key="1">
    <source>
        <dbReference type="HAMAP-Rule" id="MF_01001"/>
    </source>
</evidence>
<keyword id="KW-0328">Glycosyltransferase</keyword>
<keyword id="KW-0808">Transferase</keyword>
<name>WECG_KLEP3</name>
<proteinExistence type="inferred from homology"/>